<name>GATB_HERA2</name>
<proteinExistence type="inferred from homology"/>
<feature type="chain" id="PRO_1000095215" description="Aspartyl/glutamyl-tRNA(Asn/Gln) amidotransferase subunit B">
    <location>
        <begin position="1"/>
        <end position="483"/>
    </location>
</feature>
<organism>
    <name type="scientific">Herpetosiphon aurantiacus (strain ATCC 23779 / DSM 785 / 114-95)</name>
    <dbReference type="NCBI Taxonomy" id="316274"/>
    <lineage>
        <taxon>Bacteria</taxon>
        <taxon>Bacillati</taxon>
        <taxon>Chloroflexota</taxon>
        <taxon>Chloroflexia</taxon>
        <taxon>Herpetosiphonales</taxon>
        <taxon>Herpetosiphonaceae</taxon>
        <taxon>Herpetosiphon</taxon>
    </lineage>
</organism>
<dbReference type="EC" id="6.3.5.-" evidence="1"/>
<dbReference type="EMBL" id="CP000875">
    <property type="protein sequence ID" value="ABX02749.1"/>
    <property type="molecule type" value="Genomic_DNA"/>
</dbReference>
<dbReference type="SMR" id="A9B5C4"/>
<dbReference type="FunCoup" id="A9B5C4">
    <property type="interactions" value="525"/>
</dbReference>
<dbReference type="STRING" id="316274.Haur_0097"/>
<dbReference type="KEGG" id="hau:Haur_0097"/>
<dbReference type="eggNOG" id="COG0064">
    <property type="taxonomic scope" value="Bacteria"/>
</dbReference>
<dbReference type="HOGENOM" id="CLU_019240_0_0_0"/>
<dbReference type="InParanoid" id="A9B5C4"/>
<dbReference type="Proteomes" id="UP000000787">
    <property type="component" value="Chromosome"/>
</dbReference>
<dbReference type="GO" id="GO:0050566">
    <property type="term" value="F:asparaginyl-tRNA synthase (glutamine-hydrolyzing) activity"/>
    <property type="evidence" value="ECO:0007669"/>
    <property type="project" value="RHEA"/>
</dbReference>
<dbReference type="GO" id="GO:0005524">
    <property type="term" value="F:ATP binding"/>
    <property type="evidence" value="ECO:0007669"/>
    <property type="project" value="UniProtKB-KW"/>
</dbReference>
<dbReference type="GO" id="GO:0050567">
    <property type="term" value="F:glutaminyl-tRNA synthase (glutamine-hydrolyzing) activity"/>
    <property type="evidence" value="ECO:0007669"/>
    <property type="project" value="UniProtKB-UniRule"/>
</dbReference>
<dbReference type="GO" id="GO:0070681">
    <property type="term" value="P:glutaminyl-tRNAGln biosynthesis via transamidation"/>
    <property type="evidence" value="ECO:0007669"/>
    <property type="project" value="TreeGrafter"/>
</dbReference>
<dbReference type="GO" id="GO:0006412">
    <property type="term" value="P:translation"/>
    <property type="evidence" value="ECO:0007669"/>
    <property type="project" value="UniProtKB-UniRule"/>
</dbReference>
<dbReference type="FunFam" id="1.10.10.410:FF:000001">
    <property type="entry name" value="Aspartyl/glutamyl-tRNA(Asn/Gln) amidotransferase subunit B"/>
    <property type="match status" value="1"/>
</dbReference>
<dbReference type="FunFam" id="1.10.150.380:FF:000001">
    <property type="entry name" value="Aspartyl/glutamyl-tRNA(Asn/Gln) amidotransferase subunit B"/>
    <property type="match status" value="1"/>
</dbReference>
<dbReference type="Gene3D" id="1.10.10.410">
    <property type="match status" value="1"/>
</dbReference>
<dbReference type="Gene3D" id="1.10.150.380">
    <property type="entry name" value="GatB domain, N-terminal subdomain"/>
    <property type="match status" value="1"/>
</dbReference>
<dbReference type="HAMAP" id="MF_00121">
    <property type="entry name" value="GatB"/>
    <property type="match status" value="1"/>
</dbReference>
<dbReference type="InterPro" id="IPR017959">
    <property type="entry name" value="Asn/Gln-tRNA_amidoTrfase_suB/E"/>
</dbReference>
<dbReference type="InterPro" id="IPR006075">
    <property type="entry name" value="Asn/Gln-tRNA_Trfase_suB/E_cat"/>
</dbReference>
<dbReference type="InterPro" id="IPR018027">
    <property type="entry name" value="Asn/Gln_amidotransferase"/>
</dbReference>
<dbReference type="InterPro" id="IPR003789">
    <property type="entry name" value="Asn/Gln_tRNA_amidoTrase-B-like"/>
</dbReference>
<dbReference type="InterPro" id="IPR004413">
    <property type="entry name" value="GatB"/>
</dbReference>
<dbReference type="InterPro" id="IPR042114">
    <property type="entry name" value="GatB_C_1"/>
</dbReference>
<dbReference type="InterPro" id="IPR023168">
    <property type="entry name" value="GatB_Yqey_C_2"/>
</dbReference>
<dbReference type="InterPro" id="IPR017958">
    <property type="entry name" value="Gln-tRNA_amidoTrfase_suB_CS"/>
</dbReference>
<dbReference type="InterPro" id="IPR014746">
    <property type="entry name" value="Gln_synth/guanido_kin_cat_dom"/>
</dbReference>
<dbReference type="NCBIfam" id="TIGR00133">
    <property type="entry name" value="gatB"/>
    <property type="match status" value="1"/>
</dbReference>
<dbReference type="NCBIfam" id="NF004012">
    <property type="entry name" value="PRK05477.1-2"/>
    <property type="match status" value="1"/>
</dbReference>
<dbReference type="NCBIfam" id="NF004014">
    <property type="entry name" value="PRK05477.1-4"/>
    <property type="match status" value="1"/>
</dbReference>
<dbReference type="PANTHER" id="PTHR11659">
    <property type="entry name" value="GLUTAMYL-TRNA GLN AMIDOTRANSFERASE SUBUNIT B MITOCHONDRIAL AND PROKARYOTIC PET112-RELATED"/>
    <property type="match status" value="1"/>
</dbReference>
<dbReference type="PANTHER" id="PTHR11659:SF0">
    <property type="entry name" value="GLUTAMYL-TRNA(GLN) AMIDOTRANSFERASE SUBUNIT B, MITOCHONDRIAL"/>
    <property type="match status" value="1"/>
</dbReference>
<dbReference type="Pfam" id="PF02934">
    <property type="entry name" value="GatB_N"/>
    <property type="match status" value="1"/>
</dbReference>
<dbReference type="Pfam" id="PF02637">
    <property type="entry name" value="GatB_Yqey"/>
    <property type="match status" value="1"/>
</dbReference>
<dbReference type="SMART" id="SM00845">
    <property type="entry name" value="GatB_Yqey"/>
    <property type="match status" value="1"/>
</dbReference>
<dbReference type="SUPFAM" id="SSF89095">
    <property type="entry name" value="GatB/YqeY motif"/>
    <property type="match status" value="1"/>
</dbReference>
<dbReference type="SUPFAM" id="SSF55931">
    <property type="entry name" value="Glutamine synthetase/guanido kinase"/>
    <property type="match status" value="1"/>
</dbReference>
<dbReference type="PROSITE" id="PS01234">
    <property type="entry name" value="GATB"/>
    <property type="match status" value="1"/>
</dbReference>
<gene>
    <name evidence="1" type="primary">gatB</name>
    <name type="ordered locus">Haur_0097</name>
</gene>
<keyword id="KW-0067">ATP-binding</keyword>
<keyword id="KW-0436">Ligase</keyword>
<keyword id="KW-0547">Nucleotide-binding</keyword>
<keyword id="KW-0648">Protein biosynthesis</keyword>
<reference key="1">
    <citation type="journal article" date="2011" name="Stand. Genomic Sci.">
        <title>Complete genome sequence of the filamentous gliding predatory bacterium Herpetosiphon aurantiacus type strain (114-95(T)).</title>
        <authorList>
            <person name="Kiss H."/>
            <person name="Nett M."/>
            <person name="Domin N."/>
            <person name="Martin K."/>
            <person name="Maresca J.A."/>
            <person name="Copeland A."/>
            <person name="Lapidus A."/>
            <person name="Lucas S."/>
            <person name="Berry K.W."/>
            <person name="Glavina Del Rio T."/>
            <person name="Dalin E."/>
            <person name="Tice H."/>
            <person name="Pitluck S."/>
            <person name="Richardson P."/>
            <person name="Bruce D."/>
            <person name="Goodwin L."/>
            <person name="Han C."/>
            <person name="Detter J.C."/>
            <person name="Schmutz J."/>
            <person name="Brettin T."/>
            <person name="Land M."/>
            <person name="Hauser L."/>
            <person name="Kyrpides N.C."/>
            <person name="Ivanova N."/>
            <person name="Goeker M."/>
            <person name="Woyke T."/>
            <person name="Klenk H.P."/>
            <person name="Bryant D.A."/>
        </authorList>
    </citation>
    <scope>NUCLEOTIDE SEQUENCE [LARGE SCALE GENOMIC DNA]</scope>
    <source>
        <strain>ATCC 23779 / DSM 785 / 114-95</strain>
    </source>
</reference>
<accession>A9B5C4</accession>
<evidence type="ECO:0000255" key="1">
    <source>
        <dbReference type="HAMAP-Rule" id="MF_00121"/>
    </source>
</evidence>
<protein>
    <recommendedName>
        <fullName evidence="1">Aspartyl/glutamyl-tRNA(Asn/Gln) amidotransferase subunit B</fullName>
        <shortName evidence="1">Asp/Glu-ADT subunit B</shortName>
        <ecNumber evidence="1">6.3.5.-</ecNumber>
    </recommendedName>
</protein>
<sequence>MKYTATIGLEVHAQILTKSKMFSGCNAAYASAPANSCIDEVSIGLPGTLPVVNQEAIRKAALLGLALNCEIPEYCEFSRKSYTYPDLPKAWQITMYDKPICINGELEITLGNGETKRVGITRAHLEEDTGMLQHGDETHSLVDYNRSGVPLLEIVSEPDMTTPEEARLYATKLRQILVFLGVNSGNLEEGALRVDANVSIRPEGQKEFGTKVEIKNMNSFRNLERALVYELERQEKVLREGGTIIQETRGWDDAAGITLSQRSKEHAHDYRYFPEPDLPPLELSREWVAERRAELPELPDAKFARYLSEFGLSKQDAALLSGERETADYFETIVATAGAANAKPVANWITGELFRLIKDGAETLAEVAKRVTPANLTSLIDVVAKGEIGSTVAKQVFEEMYRTGETPTAIINAKGLRQISDSSVLTQAARDAIAANPKVVADYKSGKLPAIKFLVGQVMRATKGQANPQVVEEALKTELDATN</sequence>
<comment type="function">
    <text evidence="1">Allows the formation of correctly charged Asn-tRNA(Asn) or Gln-tRNA(Gln) through the transamidation of misacylated Asp-tRNA(Asn) or Glu-tRNA(Gln) in organisms which lack either or both of asparaginyl-tRNA or glutaminyl-tRNA synthetases. The reaction takes place in the presence of glutamine and ATP through an activated phospho-Asp-tRNA(Asn) or phospho-Glu-tRNA(Gln).</text>
</comment>
<comment type="catalytic activity">
    <reaction evidence="1">
        <text>L-glutamyl-tRNA(Gln) + L-glutamine + ATP + H2O = L-glutaminyl-tRNA(Gln) + L-glutamate + ADP + phosphate + H(+)</text>
        <dbReference type="Rhea" id="RHEA:17521"/>
        <dbReference type="Rhea" id="RHEA-COMP:9681"/>
        <dbReference type="Rhea" id="RHEA-COMP:9684"/>
        <dbReference type="ChEBI" id="CHEBI:15377"/>
        <dbReference type="ChEBI" id="CHEBI:15378"/>
        <dbReference type="ChEBI" id="CHEBI:29985"/>
        <dbReference type="ChEBI" id="CHEBI:30616"/>
        <dbReference type="ChEBI" id="CHEBI:43474"/>
        <dbReference type="ChEBI" id="CHEBI:58359"/>
        <dbReference type="ChEBI" id="CHEBI:78520"/>
        <dbReference type="ChEBI" id="CHEBI:78521"/>
        <dbReference type="ChEBI" id="CHEBI:456216"/>
    </reaction>
</comment>
<comment type="catalytic activity">
    <reaction evidence="1">
        <text>L-aspartyl-tRNA(Asn) + L-glutamine + ATP + H2O = L-asparaginyl-tRNA(Asn) + L-glutamate + ADP + phosphate + 2 H(+)</text>
        <dbReference type="Rhea" id="RHEA:14513"/>
        <dbReference type="Rhea" id="RHEA-COMP:9674"/>
        <dbReference type="Rhea" id="RHEA-COMP:9677"/>
        <dbReference type="ChEBI" id="CHEBI:15377"/>
        <dbReference type="ChEBI" id="CHEBI:15378"/>
        <dbReference type="ChEBI" id="CHEBI:29985"/>
        <dbReference type="ChEBI" id="CHEBI:30616"/>
        <dbReference type="ChEBI" id="CHEBI:43474"/>
        <dbReference type="ChEBI" id="CHEBI:58359"/>
        <dbReference type="ChEBI" id="CHEBI:78515"/>
        <dbReference type="ChEBI" id="CHEBI:78516"/>
        <dbReference type="ChEBI" id="CHEBI:456216"/>
    </reaction>
</comment>
<comment type="subunit">
    <text evidence="1">Heterotrimer of A, B and C subunits.</text>
</comment>
<comment type="similarity">
    <text evidence="1">Belongs to the GatB/GatE family. GatB subfamily.</text>
</comment>